<name>RS212_FRATO</name>
<organism>
    <name type="scientific">Francisella tularensis subsp. holarctica (strain OSU18)</name>
    <dbReference type="NCBI Taxonomy" id="393011"/>
    <lineage>
        <taxon>Bacteria</taxon>
        <taxon>Pseudomonadati</taxon>
        <taxon>Pseudomonadota</taxon>
        <taxon>Gammaproteobacteria</taxon>
        <taxon>Thiotrichales</taxon>
        <taxon>Francisellaceae</taxon>
        <taxon>Francisella</taxon>
    </lineage>
</organism>
<proteinExistence type="inferred from homology"/>
<reference key="1">
    <citation type="journal article" date="2006" name="J. Bacteriol.">
        <title>Chromosome rearrangement and diversification of Francisella tularensis revealed by the type B (OSU18) genome sequence.</title>
        <authorList>
            <person name="Petrosino J.F."/>
            <person name="Xiang Q."/>
            <person name="Karpathy S.E."/>
            <person name="Jiang H."/>
            <person name="Yerrapragada S."/>
            <person name="Liu Y."/>
            <person name="Gioia J."/>
            <person name="Hemphill L."/>
            <person name="Gonzalez A."/>
            <person name="Raghavan T.M."/>
            <person name="Uzman A."/>
            <person name="Fox G.E."/>
            <person name="Highlander S."/>
            <person name="Reichard M."/>
            <person name="Morton R.J."/>
            <person name="Clinkenbeard K.D."/>
            <person name="Weinstock G.M."/>
        </authorList>
    </citation>
    <scope>NUCLEOTIDE SEQUENCE [LARGE SCALE GENOMIC DNA]</scope>
    <source>
        <strain>OSU18</strain>
    </source>
</reference>
<sequence length="65" mass="7840">MPSVRIKEREPFDVALRRFKRSCEKAGIVSELRRREYFEKPTWARKRKKTAAVKRAHKSNIIVKR</sequence>
<protein>
    <recommendedName>
        <fullName evidence="1">Small ribosomal subunit protein bS21B</fullName>
    </recommendedName>
    <alternativeName>
        <fullName evidence="2">30S ribosomal protein S21 2</fullName>
    </alternativeName>
</protein>
<feature type="chain" id="PRO_0000266672" description="Small ribosomal subunit protein bS21B">
    <location>
        <begin position="1"/>
        <end position="65"/>
    </location>
</feature>
<comment type="similarity">
    <text evidence="1">Belongs to the bacterial ribosomal protein bS21 family.</text>
</comment>
<dbReference type="EMBL" id="CP000437">
    <property type="protein sequence ID" value="ABI82917.1"/>
    <property type="molecule type" value="Genomic_DNA"/>
</dbReference>
<dbReference type="SMR" id="Q0BLW7"/>
<dbReference type="KEGG" id="fth:FTH_1026"/>
<dbReference type="GO" id="GO:1990904">
    <property type="term" value="C:ribonucleoprotein complex"/>
    <property type="evidence" value="ECO:0007669"/>
    <property type="project" value="UniProtKB-KW"/>
</dbReference>
<dbReference type="GO" id="GO:0005840">
    <property type="term" value="C:ribosome"/>
    <property type="evidence" value="ECO:0007669"/>
    <property type="project" value="UniProtKB-KW"/>
</dbReference>
<dbReference type="GO" id="GO:0003735">
    <property type="term" value="F:structural constituent of ribosome"/>
    <property type="evidence" value="ECO:0007669"/>
    <property type="project" value="InterPro"/>
</dbReference>
<dbReference type="GO" id="GO:0006412">
    <property type="term" value="P:translation"/>
    <property type="evidence" value="ECO:0007669"/>
    <property type="project" value="UniProtKB-UniRule"/>
</dbReference>
<dbReference type="Gene3D" id="1.20.5.1150">
    <property type="entry name" value="Ribosomal protein S8"/>
    <property type="match status" value="1"/>
</dbReference>
<dbReference type="HAMAP" id="MF_00358">
    <property type="entry name" value="Ribosomal_bS21"/>
    <property type="match status" value="1"/>
</dbReference>
<dbReference type="InterPro" id="IPR001911">
    <property type="entry name" value="Ribosomal_bS21"/>
</dbReference>
<dbReference type="InterPro" id="IPR018278">
    <property type="entry name" value="Ribosomal_bS21_CS"/>
</dbReference>
<dbReference type="InterPro" id="IPR038380">
    <property type="entry name" value="Ribosomal_bS21_sf"/>
</dbReference>
<dbReference type="NCBIfam" id="TIGR00030">
    <property type="entry name" value="S21p"/>
    <property type="match status" value="1"/>
</dbReference>
<dbReference type="PANTHER" id="PTHR21109">
    <property type="entry name" value="MITOCHONDRIAL 28S RIBOSOMAL PROTEIN S21"/>
    <property type="match status" value="1"/>
</dbReference>
<dbReference type="PANTHER" id="PTHR21109:SF22">
    <property type="entry name" value="SMALL RIBOSOMAL SUBUNIT PROTEIN BS21"/>
    <property type="match status" value="1"/>
</dbReference>
<dbReference type="Pfam" id="PF01165">
    <property type="entry name" value="Ribosomal_S21"/>
    <property type="match status" value="1"/>
</dbReference>
<dbReference type="PRINTS" id="PR00976">
    <property type="entry name" value="RIBOSOMALS21"/>
</dbReference>
<dbReference type="PROSITE" id="PS01181">
    <property type="entry name" value="RIBOSOMAL_S21"/>
    <property type="match status" value="1"/>
</dbReference>
<keyword id="KW-0687">Ribonucleoprotein</keyword>
<keyword id="KW-0689">Ribosomal protein</keyword>
<evidence type="ECO:0000255" key="1">
    <source>
        <dbReference type="HAMAP-Rule" id="MF_00358"/>
    </source>
</evidence>
<evidence type="ECO:0000305" key="2"/>
<gene>
    <name evidence="1" type="primary">rpsU2</name>
    <name type="ordered locus">FTH_1026</name>
</gene>
<accession>Q0BLW7</accession>